<reference key="1">
    <citation type="journal article" date="2002" name="Proc. Natl. Acad. Sci. U.S.A.">
        <title>The complete genome of hyperthermophile Methanopyrus kandleri AV19 and monophyly of archaeal methanogens.</title>
        <authorList>
            <person name="Slesarev A.I."/>
            <person name="Mezhevaya K.V."/>
            <person name="Makarova K.S."/>
            <person name="Polushin N.N."/>
            <person name="Shcherbinina O.V."/>
            <person name="Shakhova V.V."/>
            <person name="Belova G.I."/>
            <person name="Aravind L."/>
            <person name="Natale D.A."/>
            <person name="Rogozin I.B."/>
            <person name="Tatusov R.L."/>
            <person name="Wolf Y.I."/>
            <person name="Stetter K.O."/>
            <person name="Malykh A.G."/>
            <person name="Koonin E.V."/>
            <person name="Kozyavkin S.A."/>
        </authorList>
    </citation>
    <scope>NUCLEOTIDE SEQUENCE [LARGE SCALE GENOMIC DNA]</scope>
    <source>
        <strain>AV19 / DSM 6324 / JCM 9639 / NBRC 100938</strain>
    </source>
</reference>
<dbReference type="EC" id="6.3.4.2" evidence="1"/>
<dbReference type="EMBL" id="AE009439">
    <property type="protein sequence ID" value="AAM01422.1"/>
    <property type="molecule type" value="Genomic_DNA"/>
</dbReference>
<dbReference type="RefSeq" id="WP_011018577.1">
    <property type="nucleotide sequence ID" value="NC_003551.1"/>
</dbReference>
<dbReference type="SMR" id="Q8TYT7"/>
<dbReference type="FunCoup" id="Q8TYT7">
    <property type="interactions" value="198"/>
</dbReference>
<dbReference type="STRING" id="190192.MK0205"/>
<dbReference type="PaxDb" id="190192-MK0205"/>
<dbReference type="EnsemblBacteria" id="AAM01422">
    <property type="protein sequence ID" value="AAM01422"/>
    <property type="gene ID" value="MK0205"/>
</dbReference>
<dbReference type="GeneID" id="1477508"/>
<dbReference type="KEGG" id="mka:MK0205"/>
<dbReference type="PATRIC" id="fig|190192.8.peg.206"/>
<dbReference type="HOGENOM" id="CLU_011675_5_0_2"/>
<dbReference type="InParanoid" id="Q8TYT7"/>
<dbReference type="UniPathway" id="UPA00159">
    <property type="reaction ID" value="UER00277"/>
</dbReference>
<dbReference type="Proteomes" id="UP000001826">
    <property type="component" value="Chromosome"/>
</dbReference>
<dbReference type="GO" id="GO:0005524">
    <property type="term" value="F:ATP binding"/>
    <property type="evidence" value="ECO:0007669"/>
    <property type="project" value="UniProtKB-KW"/>
</dbReference>
<dbReference type="GO" id="GO:0003883">
    <property type="term" value="F:CTP synthase activity"/>
    <property type="evidence" value="ECO:0007669"/>
    <property type="project" value="UniProtKB-UniRule"/>
</dbReference>
<dbReference type="GO" id="GO:0004359">
    <property type="term" value="F:glutaminase activity"/>
    <property type="evidence" value="ECO:0007669"/>
    <property type="project" value="RHEA"/>
</dbReference>
<dbReference type="GO" id="GO:0042802">
    <property type="term" value="F:identical protein binding"/>
    <property type="evidence" value="ECO:0007669"/>
    <property type="project" value="TreeGrafter"/>
</dbReference>
<dbReference type="GO" id="GO:0046872">
    <property type="term" value="F:metal ion binding"/>
    <property type="evidence" value="ECO:0007669"/>
    <property type="project" value="UniProtKB-KW"/>
</dbReference>
<dbReference type="GO" id="GO:0044210">
    <property type="term" value="P:'de novo' CTP biosynthetic process"/>
    <property type="evidence" value="ECO:0007669"/>
    <property type="project" value="UniProtKB-UniRule"/>
</dbReference>
<dbReference type="GO" id="GO:0019856">
    <property type="term" value="P:pyrimidine nucleobase biosynthetic process"/>
    <property type="evidence" value="ECO:0007669"/>
    <property type="project" value="TreeGrafter"/>
</dbReference>
<dbReference type="CDD" id="cd03113">
    <property type="entry name" value="CTPS_N"/>
    <property type="match status" value="1"/>
</dbReference>
<dbReference type="CDD" id="cd01746">
    <property type="entry name" value="GATase1_CTP_Synthase"/>
    <property type="match status" value="1"/>
</dbReference>
<dbReference type="FunFam" id="3.40.50.300:FF:000009">
    <property type="entry name" value="CTP synthase"/>
    <property type="match status" value="1"/>
</dbReference>
<dbReference type="FunFam" id="3.40.50.880:FF:000002">
    <property type="entry name" value="CTP synthase"/>
    <property type="match status" value="1"/>
</dbReference>
<dbReference type="Gene3D" id="3.40.50.880">
    <property type="match status" value="1"/>
</dbReference>
<dbReference type="Gene3D" id="3.40.50.300">
    <property type="entry name" value="P-loop containing nucleotide triphosphate hydrolases"/>
    <property type="match status" value="1"/>
</dbReference>
<dbReference type="HAMAP" id="MF_01227">
    <property type="entry name" value="PyrG"/>
    <property type="match status" value="1"/>
</dbReference>
<dbReference type="InterPro" id="IPR029062">
    <property type="entry name" value="Class_I_gatase-like"/>
</dbReference>
<dbReference type="InterPro" id="IPR004468">
    <property type="entry name" value="CTP_synthase"/>
</dbReference>
<dbReference type="InterPro" id="IPR017456">
    <property type="entry name" value="CTP_synthase_N"/>
</dbReference>
<dbReference type="InterPro" id="IPR017926">
    <property type="entry name" value="GATASE"/>
</dbReference>
<dbReference type="InterPro" id="IPR033828">
    <property type="entry name" value="GATase1_CTP_Synthase"/>
</dbReference>
<dbReference type="InterPro" id="IPR027417">
    <property type="entry name" value="P-loop_NTPase"/>
</dbReference>
<dbReference type="NCBIfam" id="NF003792">
    <property type="entry name" value="PRK05380.1"/>
    <property type="match status" value="1"/>
</dbReference>
<dbReference type="NCBIfam" id="TIGR00337">
    <property type="entry name" value="PyrG"/>
    <property type="match status" value="1"/>
</dbReference>
<dbReference type="PANTHER" id="PTHR11550">
    <property type="entry name" value="CTP SYNTHASE"/>
    <property type="match status" value="1"/>
</dbReference>
<dbReference type="PANTHER" id="PTHR11550:SF0">
    <property type="entry name" value="CTP SYNTHASE-RELATED"/>
    <property type="match status" value="1"/>
</dbReference>
<dbReference type="Pfam" id="PF06418">
    <property type="entry name" value="CTP_synth_N"/>
    <property type="match status" value="1"/>
</dbReference>
<dbReference type="Pfam" id="PF00117">
    <property type="entry name" value="GATase"/>
    <property type="match status" value="1"/>
</dbReference>
<dbReference type="SUPFAM" id="SSF52317">
    <property type="entry name" value="Class I glutamine amidotransferase-like"/>
    <property type="match status" value="1"/>
</dbReference>
<dbReference type="SUPFAM" id="SSF52540">
    <property type="entry name" value="P-loop containing nucleoside triphosphate hydrolases"/>
    <property type="match status" value="1"/>
</dbReference>
<dbReference type="PROSITE" id="PS51273">
    <property type="entry name" value="GATASE_TYPE_1"/>
    <property type="match status" value="1"/>
</dbReference>
<proteinExistence type="inferred from homology"/>
<protein>
    <recommendedName>
        <fullName evidence="1">CTP synthase</fullName>
        <ecNumber evidence="1">6.3.4.2</ecNumber>
    </recommendedName>
    <alternativeName>
        <fullName evidence="1">Cytidine 5'-triphosphate synthase</fullName>
    </alternativeName>
    <alternativeName>
        <fullName evidence="1">Cytidine triphosphate synthetase</fullName>
        <shortName evidence="1">CTP synthetase</shortName>
        <shortName evidence="1">CTPS</shortName>
    </alternativeName>
    <alternativeName>
        <fullName evidence="1">UTP--ammonia ligase</fullName>
    </alternativeName>
</protein>
<organism>
    <name type="scientific">Methanopyrus kandleri (strain AV19 / DSM 6324 / JCM 9639 / NBRC 100938)</name>
    <dbReference type="NCBI Taxonomy" id="190192"/>
    <lineage>
        <taxon>Archaea</taxon>
        <taxon>Methanobacteriati</taxon>
        <taxon>Methanobacteriota</taxon>
        <taxon>Methanomada group</taxon>
        <taxon>Methanopyri</taxon>
        <taxon>Methanopyrales</taxon>
        <taxon>Methanopyraceae</taxon>
        <taxon>Methanopyrus</taxon>
    </lineage>
</organism>
<gene>
    <name evidence="1" type="primary">pyrG</name>
    <name type="ordered locus">MK0205</name>
</gene>
<name>PYRG_METKA</name>
<feature type="chain" id="PRO_0000138261" description="CTP synthase">
    <location>
        <begin position="1"/>
        <end position="535"/>
    </location>
</feature>
<feature type="domain" description="Glutamine amidotransferase type-1" evidence="1">
    <location>
        <begin position="291"/>
        <end position="535"/>
    </location>
</feature>
<feature type="region of interest" description="Amidoligase domain" evidence="1">
    <location>
        <begin position="1"/>
        <end position="266"/>
    </location>
</feature>
<feature type="active site" description="Nucleophile; for glutamine hydrolysis" evidence="1">
    <location>
        <position position="382"/>
    </location>
</feature>
<feature type="active site" evidence="1">
    <location>
        <position position="508"/>
    </location>
</feature>
<feature type="active site" evidence="1">
    <location>
        <position position="510"/>
    </location>
</feature>
<feature type="binding site" evidence="1">
    <location>
        <position position="12"/>
    </location>
    <ligand>
        <name>CTP</name>
        <dbReference type="ChEBI" id="CHEBI:37563"/>
        <note>allosteric inhibitor</note>
    </ligand>
</feature>
<feature type="binding site" evidence="1">
    <location>
        <position position="12"/>
    </location>
    <ligand>
        <name>UTP</name>
        <dbReference type="ChEBI" id="CHEBI:46398"/>
    </ligand>
</feature>
<feature type="binding site" evidence="1">
    <location>
        <begin position="13"/>
        <end position="18"/>
    </location>
    <ligand>
        <name>ATP</name>
        <dbReference type="ChEBI" id="CHEBI:30616"/>
    </ligand>
</feature>
<feature type="binding site" evidence="1">
    <location>
        <position position="70"/>
    </location>
    <ligand>
        <name>ATP</name>
        <dbReference type="ChEBI" id="CHEBI:30616"/>
    </ligand>
</feature>
<feature type="binding site" evidence="1">
    <location>
        <position position="70"/>
    </location>
    <ligand>
        <name>Mg(2+)</name>
        <dbReference type="ChEBI" id="CHEBI:18420"/>
    </ligand>
</feature>
<feature type="binding site" evidence="1">
    <location>
        <position position="140"/>
    </location>
    <ligand>
        <name>Mg(2+)</name>
        <dbReference type="ChEBI" id="CHEBI:18420"/>
    </ligand>
</feature>
<feature type="binding site" evidence="1">
    <location>
        <begin position="147"/>
        <end position="149"/>
    </location>
    <ligand>
        <name>CTP</name>
        <dbReference type="ChEBI" id="CHEBI:37563"/>
        <note>allosteric inhibitor</note>
    </ligand>
</feature>
<feature type="binding site" evidence="1">
    <location>
        <begin position="187"/>
        <end position="192"/>
    </location>
    <ligand>
        <name>CTP</name>
        <dbReference type="ChEBI" id="CHEBI:37563"/>
        <note>allosteric inhibitor</note>
    </ligand>
</feature>
<feature type="binding site" evidence="1">
    <location>
        <begin position="187"/>
        <end position="192"/>
    </location>
    <ligand>
        <name>UTP</name>
        <dbReference type="ChEBI" id="CHEBI:46398"/>
    </ligand>
</feature>
<feature type="binding site" evidence="1">
    <location>
        <position position="223"/>
    </location>
    <ligand>
        <name>CTP</name>
        <dbReference type="ChEBI" id="CHEBI:37563"/>
        <note>allosteric inhibitor</note>
    </ligand>
</feature>
<feature type="binding site" evidence="1">
    <location>
        <position position="223"/>
    </location>
    <ligand>
        <name>UTP</name>
        <dbReference type="ChEBI" id="CHEBI:46398"/>
    </ligand>
</feature>
<feature type="binding site" evidence="1">
    <location>
        <position position="355"/>
    </location>
    <ligand>
        <name>L-glutamine</name>
        <dbReference type="ChEBI" id="CHEBI:58359"/>
    </ligand>
</feature>
<feature type="binding site" evidence="1">
    <location>
        <begin position="383"/>
        <end position="386"/>
    </location>
    <ligand>
        <name>L-glutamine</name>
        <dbReference type="ChEBI" id="CHEBI:58359"/>
    </ligand>
</feature>
<feature type="binding site" evidence="1">
    <location>
        <position position="406"/>
    </location>
    <ligand>
        <name>L-glutamine</name>
        <dbReference type="ChEBI" id="CHEBI:58359"/>
    </ligand>
</feature>
<feature type="binding site" evidence="1">
    <location>
        <position position="464"/>
    </location>
    <ligand>
        <name>L-glutamine</name>
        <dbReference type="ChEBI" id="CHEBI:58359"/>
    </ligand>
</feature>
<evidence type="ECO:0000255" key="1">
    <source>
        <dbReference type="HAMAP-Rule" id="MF_01227"/>
    </source>
</evidence>
<keyword id="KW-0067">ATP-binding</keyword>
<keyword id="KW-0315">Glutamine amidotransferase</keyword>
<keyword id="KW-0436">Ligase</keyword>
<keyword id="KW-0460">Magnesium</keyword>
<keyword id="KW-0479">Metal-binding</keyword>
<keyword id="KW-0547">Nucleotide-binding</keyword>
<keyword id="KW-0665">Pyrimidine biosynthesis</keyword>
<keyword id="KW-1185">Reference proteome</keyword>
<comment type="function">
    <text evidence="1">Catalyzes the ATP-dependent amination of UTP to CTP with either L-glutamine or ammonia as the source of nitrogen. Regulates intracellular CTP levels through interactions with the four ribonucleotide triphosphates.</text>
</comment>
<comment type="catalytic activity">
    <reaction evidence="1">
        <text>UTP + L-glutamine + ATP + H2O = CTP + L-glutamate + ADP + phosphate + 2 H(+)</text>
        <dbReference type="Rhea" id="RHEA:26426"/>
        <dbReference type="ChEBI" id="CHEBI:15377"/>
        <dbReference type="ChEBI" id="CHEBI:15378"/>
        <dbReference type="ChEBI" id="CHEBI:29985"/>
        <dbReference type="ChEBI" id="CHEBI:30616"/>
        <dbReference type="ChEBI" id="CHEBI:37563"/>
        <dbReference type="ChEBI" id="CHEBI:43474"/>
        <dbReference type="ChEBI" id="CHEBI:46398"/>
        <dbReference type="ChEBI" id="CHEBI:58359"/>
        <dbReference type="ChEBI" id="CHEBI:456216"/>
        <dbReference type="EC" id="6.3.4.2"/>
    </reaction>
</comment>
<comment type="catalytic activity">
    <reaction evidence="1">
        <text>L-glutamine + H2O = L-glutamate + NH4(+)</text>
        <dbReference type="Rhea" id="RHEA:15889"/>
        <dbReference type="ChEBI" id="CHEBI:15377"/>
        <dbReference type="ChEBI" id="CHEBI:28938"/>
        <dbReference type="ChEBI" id="CHEBI:29985"/>
        <dbReference type="ChEBI" id="CHEBI:58359"/>
    </reaction>
</comment>
<comment type="catalytic activity">
    <reaction evidence="1">
        <text>UTP + NH4(+) + ATP = CTP + ADP + phosphate + 2 H(+)</text>
        <dbReference type="Rhea" id="RHEA:16597"/>
        <dbReference type="ChEBI" id="CHEBI:15378"/>
        <dbReference type="ChEBI" id="CHEBI:28938"/>
        <dbReference type="ChEBI" id="CHEBI:30616"/>
        <dbReference type="ChEBI" id="CHEBI:37563"/>
        <dbReference type="ChEBI" id="CHEBI:43474"/>
        <dbReference type="ChEBI" id="CHEBI:46398"/>
        <dbReference type="ChEBI" id="CHEBI:456216"/>
    </reaction>
</comment>
<comment type="activity regulation">
    <text evidence="1">Allosterically activated by GTP, when glutamine is the substrate; GTP has no effect on the reaction when ammonia is the substrate. The allosteric effector GTP functions by stabilizing the protein conformation that binds the tetrahedral intermediate(s) formed during glutamine hydrolysis. Inhibited by the product CTP, via allosteric rather than competitive inhibition.</text>
</comment>
<comment type="pathway">
    <text evidence="1">Pyrimidine metabolism; CTP biosynthesis via de novo pathway; CTP from UDP: step 2/2.</text>
</comment>
<comment type="subunit">
    <text evidence="1">Homotetramer.</text>
</comment>
<comment type="miscellaneous">
    <text evidence="1">CTPSs have evolved a hybrid strategy for distinguishing between UTP and CTP. The overlapping regions of the product feedback inhibitory and substrate sites recognize a common feature in both compounds, the triphosphate moiety. To differentiate isosteric substrate and product pyrimidine rings, an additional pocket far from the expected kinase/ligase catalytic site, specifically recognizes the cytosine and ribose portions of the product inhibitor.</text>
</comment>
<comment type="similarity">
    <text evidence="1">Belongs to the CTP synthase family.</text>
</comment>
<accession>Q8TYT7</accession>
<sequence length="535" mass="59460">MKFVVITGGVVSGIGKGITTASIGRILRARELEVTAVKIDPYINVDAGTMNPFQHGEVFVTEDGVETDLDLGHYERFMDVTLSGAHNITTGKIYQRVIEKERRGDYLGETVQVIPHITDEIKSWIREVGKASGADVVLVEIGGTVGDIEGMPFYEAVRQLQLEEGRENVMFVHLTYVPYLEHVHELKTKPTQHSVKELRSLGIQPDAIVCRCERPLDDGVKRKIALHTNVPREAVIDAHDVDLVYKVPLLLERQGFGDYICERLGLDADEPDYSDWLDFVTRIEEADDEIRIAVVGKYVDLPDAYISIREALVHAGAHVGVGVDVAWVDSEALEAGDSEAWEEVKDADGVLVPGGFGKRGVEGKIEAVRYARENDVPFLGICLGFQLVVVEYARSVLGLEDAHSTEFNPDTDHPVVDLLPEQRGVKRKGGTMRLGAEPVVLEEGSLLRRLYDDREIVLERHRHRYEVNPSYVRELEDHGLRFSGHSPDGRMEALELPDHPYFVGTQFHPEFKSRPGDPSPPFVGLIKAAAGQGPD</sequence>